<proteinExistence type="inferred from homology"/>
<feature type="chain" id="PRO_1000086888" description="ATP synthase subunit alpha">
    <location>
        <begin position="1"/>
        <end position="514"/>
    </location>
</feature>
<feature type="binding site" evidence="1">
    <location>
        <begin position="170"/>
        <end position="177"/>
    </location>
    <ligand>
        <name>ATP</name>
        <dbReference type="ChEBI" id="CHEBI:30616"/>
    </ligand>
</feature>
<feature type="site" description="Required for activity" evidence="1">
    <location>
        <position position="374"/>
    </location>
</feature>
<evidence type="ECO:0000255" key="1">
    <source>
        <dbReference type="HAMAP-Rule" id="MF_01346"/>
    </source>
</evidence>
<name>ATPA_PSEPG</name>
<accession>B0KRB0</accession>
<gene>
    <name evidence="1" type="primary">atpA</name>
    <name type="ordered locus">PputGB1_5433</name>
</gene>
<dbReference type="EC" id="7.1.2.2" evidence="1"/>
<dbReference type="EMBL" id="CP000926">
    <property type="protein sequence ID" value="ABZ01315.1"/>
    <property type="molecule type" value="Genomic_DNA"/>
</dbReference>
<dbReference type="RefSeq" id="WP_012274911.1">
    <property type="nucleotide sequence ID" value="NC_010322.1"/>
</dbReference>
<dbReference type="SMR" id="B0KRB0"/>
<dbReference type="GeneID" id="45526907"/>
<dbReference type="KEGG" id="ppg:PputGB1_5433"/>
<dbReference type="eggNOG" id="COG0056">
    <property type="taxonomic scope" value="Bacteria"/>
</dbReference>
<dbReference type="HOGENOM" id="CLU_010091_2_1_6"/>
<dbReference type="Proteomes" id="UP000002157">
    <property type="component" value="Chromosome"/>
</dbReference>
<dbReference type="GO" id="GO:0005886">
    <property type="term" value="C:plasma membrane"/>
    <property type="evidence" value="ECO:0007669"/>
    <property type="project" value="UniProtKB-SubCell"/>
</dbReference>
<dbReference type="GO" id="GO:0045259">
    <property type="term" value="C:proton-transporting ATP synthase complex"/>
    <property type="evidence" value="ECO:0007669"/>
    <property type="project" value="UniProtKB-KW"/>
</dbReference>
<dbReference type="GO" id="GO:0043531">
    <property type="term" value="F:ADP binding"/>
    <property type="evidence" value="ECO:0007669"/>
    <property type="project" value="TreeGrafter"/>
</dbReference>
<dbReference type="GO" id="GO:0005524">
    <property type="term" value="F:ATP binding"/>
    <property type="evidence" value="ECO:0007669"/>
    <property type="project" value="UniProtKB-UniRule"/>
</dbReference>
<dbReference type="GO" id="GO:0046933">
    <property type="term" value="F:proton-transporting ATP synthase activity, rotational mechanism"/>
    <property type="evidence" value="ECO:0007669"/>
    <property type="project" value="UniProtKB-UniRule"/>
</dbReference>
<dbReference type="CDD" id="cd18113">
    <property type="entry name" value="ATP-synt_F1_alpha_C"/>
    <property type="match status" value="1"/>
</dbReference>
<dbReference type="CDD" id="cd18116">
    <property type="entry name" value="ATP-synt_F1_alpha_N"/>
    <property type="match status" value="1"/>
</dbReference>
<dbReference type="CDD" id="cd01132">
    <property type="entry name" value="F1-ATPase_alpha_CD"/>
    <property type="match status" value="1"/>
</dbReference>
<dbReference type="FunFam" id="1.20.150.20:FF:000001">
    <property type="entry name" value="ATP synthase subunit alpha"/>
    <property type="match status" value="1"/>
</dbReference>
<dbReference type="FunFam" id="2.40.30.20:FF:000001">
    <property type="entry name" value="ATP synthase subunit alpha"/>
    <property type="match status" value="1"/>
</dbReference>
<dbReference type="FunFam" id="3.40.50.300:FF:000002">
    <property type="entry name" value="ATP synthase subunit alpha"/>
    <property type="match status" value="1"/>
</dbReference>
<dbReference type="Gene3D" id="2.40.30.20">
    <property type="match status" value="1"/>
</dbReference>
<dbReference type="Gene3D" id="1.20.150.20">
    <property type="entry name" value="ATP synthase alpha/beta chain, C-terminal domain"/>
    <property type="match status" value="1"/>
</dbReference>
<dbReference type="Gene3D" id="3.40.50.300">
    <property type="entry name" value="P-loop containing nucleotide triphosphate hydrolases"/>
    <property type="match status" value="1"/>
</dbReference>
<dbReference type="HAMAP" id="MF_01346">
    <property type="entry name" value="ATP_synth_alpha_bact"/>
    <property type="match status" value="1"/>
</dbReference>
<dbReference type="InterPro" id="IPR023366">
    <property type="entry name" value="ATP_synth_asu-like_sf"/>
</dbReference>
<dbReference type="InterPro" id="IPR000793">
    <property type="entry name" value="ATP_synth_asu_C"/>
</dbReference>
<dbReference type="InterPro" id="IPR038376">
    <property type="entry name" value="ATP_synth_asu_C_sf"/>
</dbReference>
<dbReference type="InterPro" id="IPR033732">
    <property type="entry name" value="ATP_synth_F1_a_nt-bd_dom"/>
</dbReference>
<dbReference type="InterPro" id="IPR005294">
    <property type="entry name" value="ATP_synth_F1_asu"/>
</dbReference>
<dbReference type="InterPro" id="IPR020003">
    <property type="entry name" value="ATPase_a/bsu_AS"/>
</dbReference>
<dbReference type="InterPro" id="IPR004100">
    <property type="entry name" value="ATPase_F1/V1/A1_a/bsu_N"/>
</dbReference>
<dbReference type="InterPro" id="IPR036121">
    <property type="entry name" value="ATPase_F1/V1/A1_a/bsu_N_sf"/>
</dbReference>
<dbReference type="InterPro" id="IPR000194">
    <property type="entry name" value="ATPase_F1/V1/A1_a/bsu_nucl-bd"/>
</dbReference>
<dbReference type="InterPro" id="IPR027417">
    <property type="entry name" value="P-loop_NTPase"/>
</dbReference>
<dbReference type="NCBIfam" id="TIGR00962">
    <property type="entry name" value="atpA"/>
    <property type="match status" value="1"/>
</dbReference>
<dbReference type="NCBIfam" id="NF009884">
    <property type="entry name" value="PRK13343.1"/>
    <property type="match status" value="1"/>
</dbReference>
<dbReference type="PANTHER" id="PTHR48082">
    <property type="entry name" value="ATP SYNTHASE SUBUNIT ALPHA, MITOCHONDRIAL"/>
    <property type="match status" value="1"/>
</dbReference>
<dbReference type="PANTHER" id="PTHR48082:SF2">
    <property type="entry name" value="ATP SYNTHASE SUBUNIT ALPHA, MITOCHONDRIAL"/>
    <property type="match status" value="1"/>
</dbReference>
<dbReference type="Pfam" id="PF00006">
    <property type="entry name" value="ATP-synt_ab"/>
    <property type="match status" value="1"/>
</dbReference>
<dbReference type="Pfam" id="PF00306">
    <property type="entry name" value="ATP-synt_ab_C"/>
    <property type="match status" value="1"/>
</dbReference>
<dbReference type="Pfam" id="PF02874">
    <property type="entry name" value="ATP-synt_ab_N"/>
    <property type="match status" value="1"/>
</dbReference>
<dbReference type="PIRSF" id="PIRSF039088">
    <property type="entry name" value="F_ATPase_subunit_alpha"/>
    <property type="match status" value="1"/>
</dbReference>
<dbReference type="SUPFAM" id="SSF47917">
    <property type="entry name" value="C-terminal domain of alpha and beta subunits of F1 ATP synthase"/>
    <property type="match status" value="1"/>
</dbReference>
<dbReference type="SUPFAM" id="SSF50615">
    <property type="entry name" value="N-terminal domain of alpha and beta subunits of F1 ATP synthase"/>
    <property type="match status" value="1"/>
</dbReference>
<dbReference type="SUPFAM" id="SSF52540">
    <property type="entry name" value="P-loop containing nucleoside triphosphate hydrolases"/>
    <property type="match status" value="1"/>
</dbReference>
<dbReference type="PROSITE" id="PS00152">
    <property type="entry name" value="ATPASE_ALPHA_BETA"/>
    <property type="match status" value="1"/>
</dbReference>
<organism>
    <name type="scientific">Pseudomonas putida (strain GB-1)</name>
    <dbReference type="NCBI Taxonomy" id="76869"/>
    <lineage>
        <taxon>Bacteria</taxon>
        <taxon>Pseudomonadati</taxon>
        <taxon>Pseudomonadota</taxon>
        <taxon>Gammaproteobacteria</taxon>
        <taxon>Pseudomonadales</taxon>
        <taxon>Pseudomonadaceae</taxon>
        <taxon>Pseudomonas</taxon>
    </lineage>
</organism>
<protein>
    <recommendedName>
        <fullName evidence="1">ATP synthase subunit alpha</fullName>
        <ecNumber evidence="1">7.1.2.2</ecNumber>
    </recommendedName>
    <alternativeName>
        <fullName evidence="1">ATP synthase F1 sector subunit alpha</fullName>
    </alternativeName>
    <alternativeName>
        <fullName evidence="1">F-ATPase subunit alpha</fullName>
    </alternativeName>
</protein>
<sequence length="514" mass="55323">MQQLNPSEISEIIKGRIDNLDVSSQARNEGTVVSVSDGIVRIHGLADVMYGEMIEFPGGVYGMALNLEQDSVGAVILGAYDTLAEGMSAKCTGRILEVPVGKELLGRVVDALGNPIDGKGPLGNTQTDAVEKVAPGVIWRKSVDQPVQTGYKSVDAMIPVGRGQRELIIGDRQIGKTAMAIDAIINQKDSGIFCVYVAVGQKRSTVANIVRKLEENGALANTIVVVASASESAALQFLAPYAGCTMGEFFRDRGEDALIVYDDLSKQAVAYRQISLLLRRPPGREAYPGDVFYLHSRLLERASRVSEEYVEKFTNGAVTGKTGSLTALPIIETQAGDVSAFVPTNVISITDGQIFLESAMFNSGIRPAVNAGVSVSRVGGAAQTKIIKKLSGGIRTALAQYRELAAFAQFASDLDEATRKQLEHGQRVTELMKQKQYAPMSIADMALSLYAAERGFLTDVEVSKIGSFEQALIAFFNRDHAELMAKINVKGDFNDEIDAGLKAGIEKFKATQTW</sequence>
<comment type="function">
    <text evidence="1">Produces ATP from ADP in the presence of a proton gradient across the membrane. The alpha chain is a regulatory subunit.</text>
</comment>
<comment type="catalytic activity">
    <reaction evidence="1">
        <text>ATP + H2O + 4 H(+)(in) = ADP + phosphate + 5 H(+)(out)</text>
        <dbReference type="Rhea" id="RHEA:57720"/>
        <dbReference type="ChEBI" id="CHEBI:15377"/>
        <dbReference type="ChEBI" id="CHEBI:15378"/>
        <dbReference type="ChEBI" id="CHEBI:30616"/>
        <dbReference type="ChEBI" id="CHEBI:43474"/>
        <dbReference type="ChEBI" id="CHEBI:456216"/>
        <dbReference type="EC" id="7.1.2.2"/>
    </reaction>
</comment>
<comment type="subunit">
    <text evidence="1">F-type ATPases have 2 components, CF(1) - the catalytic core - and CF(0) - the membrane proton channel. CF(1) has five subunits: alpha(3), beta(3), gamma(1), delta(1), epsilon(1). CF(0) has three main subunits: a(1), b(2) and c(9-12). The alpha and beta chains form an alternating ring which encloses part of the gamma chain. CF(1) is attached to CF(0) by a central stalk formed by the gamma and epsilon chains, while a peripheral stalk is formed by the delta and b chains.</text>
</comment>
<comment type="subcellular location">
    <subcellularLocation>
        <location evidence="1">Cell inner membrane</location>
        <topology evidence="1">Peripheral membrane protein</topology>
    </subcellularLocation>
</comment>
<comment type="similarity">
    <text evidence="1">Belongs to the ATPase alpha/beta chains family.</text>
</comment>
<keyword id="KW-0066">ATP synthesis</keyword>
<keyword id="KW-0067">ATP-binding</keyword>
<keyword id="KW-0997">Cell inner membrane</keyword>
<keyword id="KW-1003">Cell membrane</keyword>
<keyword id="KW-0139">CF(1)</keyword>
<keyword id="KW-0375">Hydrogen ion transport</keyword>
<keyword id="KW-0406">Ion transport</keyword>
<keyword id="KW-0472">Membrane</keyword>
<keyword id="KW-0547">Nucleotide-binding</keyword>
<keyword id="KW-1278">Translocase</keyword>
<keyword id="KW-0813">Transport</keyword>
<reference key="1">
    <citation type="submission" date="2008-01" db="EMBL/GenBank/DDBJ databases">
        <title>Complete sequence of Pseudomonas putida GB-1.</title>
        <authorList>
            <consortium name="US DOE Joint Genome Institute"/>
            <person name="Copeland A."/>
            <person name="Lucas S."/>
            <person name="Lapidus A."/>
            <person name="Barry K."/>
            <person name="Glavina del Rio T."/>
            <person name="Dalin E."/>
            <person name="Tice H."/>
            <person name="Pitluck S."/>
            <person name="Bruce D."/>
            <person name="Goodwin L."/>
            <person name="Chertkov O."/>
            <person name="Brettin T."/>
            <person name="Detter J.C."/>
            <person name="Han C."/>
            <person name="Kuske C.R."/>
            <person name="Schmutz J."/>
            <person name="Larimer F."/>
            <person name="Land M."/>
            <person name="Hauser L."/>
            <person name="Kyrpides N."/>
            <person name="Kim E."/>
            <person name="McCarthy J.K."/>
            <person name="Richardson P."/>
        </authorList>
    </citation>
    <scope>NUCLEOTIDE SEQUENCE [LARGE SCALE GENOMIC DNA]</scope>
    <source>
        <strain>GB-1</strain>
    </source>
</reference>